<reference key="1">
    <citation type="journal article" date="1987" name="Nature">
        <title>Molecular cloning of a protective antigen of schistosomes.</title>
        <authorList>
            <person name="Balloul J.-M."/>
            <person name="Sondermeyer P."/>
            <person name="Dreyer D."/>
            <person name="Capron M."/>
            <person name="Grzych J.M."/>
            <person name="Pierce R.J."/>
            <person name="Carvallo D."/>
            <person name="Lecocq J.-P."/>
            <person name="Capron A."/>
        </authorList>
    </citation>
    <scope>NUCLEOTIDE SEQUENCE [MRNA]</scope>
    <scope>PARTIAL PROTEIN SEQUENCE</scope>
</reference>
<reference key="2">
    <citation type="journal article" date="1993" name="Gene">
        <title>Cloning and characterisation of the gene encoding the 28-kDa glutathione S-transferase of Schistosoma mansoni.</title>
        <authorList>
            <person name="McNair A.T."/>
            <person name="Dissous C."/>
            <person name="Duvaux-Miret O."/>
            <person name="Capron A."/>
        </authorList>
    </citation>
    <scope>NUCLEOTIDE SEQUENCE [GENOMIC DNA]</scope>
</reference>
<reference key="3">
    <citation type="journal article" date="1994" name="Exp. Parasitol.">
        <title>Schistosoma mansoni: characterization of sequence variants of the 28-kDa glutathione S-transferase.</title>
        <authorList>
            <person name="Pierce R.J."/>
            <person name="Khalife J."/>
            <person name="Williams D.L."/>
            <person name="Kanno R."/>
            <person name="Trottein F."/>
            <person name="Lepresle T."/>
            <person name="Sabatier J."/>
            <person name="Achstetter T."/>
            <person name="Capron A."/>
        </authorList>
    </citation>
    <scope>NUCLEOTIDE SEQUENCE [MRNA]</scope>
    <source>
        <strain>Puerto Rican</strain>
    </source>
</reference>
<reference key="4">
    <citation type="journal article" date="2009" name="Nature">
        <title>The genome of the blood fluke Schistosoma mansoni.</title>
        <authorList>
            <person name="Berriman M."/>
            <person name="Haas B.J."/>
            <person name="LoVerde P.T."/>
            <person name="Wilson R.A."/>
            <person name="Dillon G.P."/>
            <person name="Cerqueira G.C."/>
            <person name="Mashiyama S.T."/>
            <person name="Al-Lazikani B."/>
            <person name="Andrade L.F."/>
            <person name="Ashton P.D."/>
            <person name="Aslett M.A."/>
            <person name="Bartholomeu D.C."/>
            <person name="Blandin G."/>
            <person name="Caffrey C.R."/>
            <person name="Coghlan A."/>
            <person name="Coulson R."/>
            <person name="Day T.A."/>
            <person name="Delcher A."/>
            <person name="DeMarco R."/>
            <person name="Djikeng A."/>
            <person name="Eyre T."/>
            <person name="Gamble J.A."/>
            <person name="Ghedin E."/>
            <person name="Gu Y."/>
            <person name="Hertz-Fowler C."/>
            <person name="Hirai H."/>
            <person name="Hirai Y."/>
            <person name="Houston R."/>
            <person name="Ivens A."/>
            <person name="Johnston D.A."/>
            <person name="Lacerda D."/>
            <person name="Macedo C.D."/>
            <person name="McVeigh P."/>
            <person name="Ning Z."/>
            <person name="Oliveira G."/>
            <person name="Overington J.P."/>
            <person name="Parkhill J."/>
            <person name="Pertea M."/>
            <person name="Pierce R.J."/>
            <person name="Protasio A.V."/>
            <person name="Quail M.A."/>
            <person name="Rajandream M.A."/>
            <person name="Rogers J."/>
            <person name="Sajid M."/>
            <person name="Salzberg S.L."/>
            <person name="Stanke M."/>
            <person name="Tivey A.R."/>
            <person name="White O."/>
            <person name="Williams D.L."/>
            <person name="Wortman J."/>
            <person name="Wu W."/>
            <person name="Zamanian M."/>
            <person name="Zerlotini A."/>
            <person name="Fraser-Liggett C.M."/>
            <person name="Barrell B.G."/>
            <person name="El-Sayed N.M."/>
        </authorList>
    </citation>
    <scope>NUCLEOTIDE SEQUENCE [LARGE SCALE GENOMIC DNA]</scope>
</reference>
<reference key="5">
    <citation type="journal article" date="2012" name="PLoS Negl. Trop. Dis.">
        <title>A systematically improved high quality genome and transcriptome of the human blood fluke Schistosoma mansoni.</title>
        <authorList>
            <person name="Protasio A.V."/>
            <person name="Tsai I.J."/>
            <person name="Babbage A."/>
            <person name="Nichol S."/>
            <person name="Hunt M."/>
            <person name="Aslett M.A."/>
            <person name="De Silva N."/>
            <person name="Velarde G.S."/>
            <person name="Anderson T.J."/>
            <person name="Clark R.C."/>
            <person name="Davidson C."/>
            <person name="Dillon G.P."/>
            <person name="Holroyd N.E."/>
            <person name="LoVerde P.T."/>
            <person name="Lloyd C."/>
            <person name="McQuillan J."/>
            <person name="Oliveira G."/>
            <person name="Otto T.D."/>
            <person name="Parker-Manuel S.J."/>
            <person name="Quail M.A."/>
            <person name="Wilson R.A."/>
            <person name="Zerlotini A."/>
            <person name="Dunne D.W."/>
            <person name="Berriman M."/>
        </authorList>
    </citation>
    <scope>NUCLEOTIDE SEQUENCE [LARGE SCALE GENOMIC DNA]</scope>
    <source>
        <strain>Puerto Rican</strain>
    </source>
</reference>
<reference key="6">
    <citation type="journal article" date="1988" name="EMBO J.">
        <title>The glutathione transferase activity and tissue distribution of a cloned Mr28K protective antigen of Schistosoma mansoni.</title>
        <authorList>
            <person name="Taylor J.B."/>
            <person name="Vidal A."/>
            <person name="Torpier G."/>
            <person name="Meyer D.J."/>
            <person name="Roitsch C."/>
            <person name="Balloul J.M."/>
            <person name="Southan C."/>
            <person name="Sondermeyer P."/>
            <person name="Pemble S."/>
            <person name="Lecocq J.P."/>
            <person name="Capron A."/>
            <person name="Ketterer B."/>
        </authorList>
    </citation>
    <scope>PROTEIN SEQUENCE OF 5-47; 71-82; 92-106; 127-138; 142-152 AND 191-205</scope>
    <scope>SUBUNIT</scope>
    <scope>TISSUE SPECIFICITY</scope>
</reference>
<reference key="7">
    <citation type="journal article" date="1994" name="J. Chromatogr. B">
        <title>Analysis of the primary structure and post-translational modifications of the Schistosoma mansoni antigen Smp28 by electrospray mass spectrometry.</title>
        <authorList>
            <person name="Bouchon B."/>
            <person name="Jaquinod M."/>
            <person name="Klarskov K."/>
            <person name="Trottein F."/>
            <person name="Klein M."/>
            <person name="van Dorsselaer A."/>
            <person name="Bischoff R."/>
            <person name="Roitsch C."/>
        </authorList>
    </citation>
    <scope>ACETYLATION AT ALA-2</scope>
    <scope>IDENTIFICATION BY MASS SPECTROMETRY</scope>
</reference>
<reference key="8">
    <citation type="journal article" date="1992" name="J. Mol. Biol.">
        <title>Crystallization and preliminary X-ray diffraction studies of a protective cloned 28 kDa glutathione S-transferase from Schistosoma mansoni.</title>
        <authorList>
            <person name="Trottein F."/>
            <person name="Vaney M.C."/>
            <person name="Bachet B."/>
            <person name="Pierce R.J."/>
            <person name="Colloc'h N."/>
            <person name="Lecocq J.-P."/>
            <person name="Capron A."/>
            <person name="Mornon J.-P."/>
        </authorList>
    </citation>
    <scope>X-RAY CRYSTALLOGRAPHY (1.89 ANGSTROMS) IN COMPLEX WITH GLUTATHIONE</scope>
</reference>
<proteinExistence type="evidence at protein level"/>
<evidence type="ECO:0000250" key="1">
    <source>
        <dbReference type="UniProtKB" id="P08515"/>
    </source>
</evidence>
<evidence type="ECO:0000269" key="2">
    <source>
    </source>
</evidence>
<evidence type="ECO:0000269" key="3">
    <source>
    </source>
</evidence>
<evidence type="ECO:0000269" key="4">
    <source>
    </source>
</evidence>
<evidence type="ECO:0000305" key="5"/>
<evidence type="ECO:0007829" key="6">
    <source>
        <dbReference type="PDB" id="1U3I"/>
    </source>
</evidence>
<sequence length="211" mass="23820">MAGEHIKVIYFDGRGRAESIRMTLVAAGVDYEDERISFQDWPKIKPTIPGGRLPAVKVTDDHGHVKWMLESLAIARYMAKKHHMMGETDEEYYSVEKLIGQAEDVEHEYHKTLMKPQEEKEKITKEILNGKVPVLLNMICESLKGSTGKLAVGDKVTLADLVLIAVIDHVTDLDKGFLTGKYPEIHKHRENLLASSPRLAKYLSNRPATPF</sequence>
<organism>
    <name type="scientific">Schistosoma mansoni</name>
    <name type="common">Blood fluke</name>
    <dbReference type="NCBI Taxonomy" id="6183"/>
    <lineage>
        <taxon>Eukaryota</taxon>
        <taxon>Metazoa</taxon>
        <taxon>Spiralia</taxon>
        <taxon>Lophotrochozoa</taxon>
        <taxon>Platyhelminthes</taxon>
        <taxon>Trematoda</taxon>
        <taxon>Digenea</taxon>
        <taxon>Strigeidida</taxon>
        <taxon>Schistosomatoidea</taxon>
        <taxon>Schistosomatidae</taxon>
        <taxon>Schistosoma</taxon>
    </lineage>
</organism>
<gene>
    <name type="primary">GST28</name>
    <name type="ORF">Smp_054160</name>
</gene>
<name>GST28_SCHMA</name>
<feature type="initiator methionine" description="Removed" evidence="4">
    <location>
        <position position="1"/>
    </location>
</feature>
<feature type="chain" id="PRO_0000185815" description="Glutathione S-transferase class-mu 28 kDa isozyme">
    <location>
        <begin position="2"/>
        <end position="211"/>
    </location>
</feature>
<feature type="domain" description="GST N-terminal">
    <location>
        <begin position="4"/>
        <end position="86"/>
    </location>
</feature>
<feature type="domain" description="GST C-terminal">
    <location>
        <begin position="88"/>
        <end position="211"/>
    </location>
</feature>
<feature type="binding site" evidence="1">
    <location>
        <begin position="10"/>
        <end position="11"/>
    </location>
    <ligand>
        <name>glutathione</name>
        <dbReference type="ChEBI" id="CHEBI:57925"/>
    </ligand>
</feature>
<feature type="binding site" evidence="2">
    <location>
        <position position="10"/>
    </location>
    <ligand>
        <name>glutathione</name>
        <dbReference type="ChEBI" id="CHEBI:57925"/>
    </ligand>
</feature>
<feature type="binding site" evidence="2">
    <location>
        <position position="16"/>
    </location>
    <ligand>
        <name>glutathione</name>
        <dbReference type="ChEBI" id="CHEBI:57925"/>
    </ligand>
</feature>
<feature type="binding site" evidence="2">
    <location>
        <begin position="41"/>
        <end position="45"/>
    </location>
    <ligand>
        <name>glutathione</name>
        <dbReference type="ChEBI" id="CHEBI:57925"/>
    </ligand>
</feature>
<feature type="binding site" evidence="2">
    <location>
        <position position="53"/>
    </location>
    <ligand>
        <name>glutathione</name>
        <dbReference type="ChEBI" id="CHEBI:57925"/>
    </ligand>
</feature>
<feature type="binding site" evidence="1">
    <location>
        <begin position="55"/>
        <end position="56"/>
    </location>
    <ligand>
        <name>glutathione</name>
        <dbReference type="ChEBI" id="CHEBI:57925"/>
    </ligand>
</feature>
<feature type="binding site" evidence="2">
    <location>
        <begin position="70"/>
        <end position="71"/>
    </location>
    <ligand>
        <name>glutathione</name>
        <dbReference type="ChEBI" id="CHEBI:57925"/>
    </ligand>
</feature>
<feature type="modified residue" description="N-acetylalanine" evidence="4">
    <location>
        <position position="2"/>
    </location>
</feature>
<feature type="sequence conflict" description="In Ref. 6; AA sequence." evidence="5" ref="6">
    <original>T</original>
    <variation>I</variation>
    <location>
        <position position="47"/>
    </location>
</feature>
<feature type="sequence conflict" description="In Ref. 6; AA sequence." evidence="5" ref="6">
    <original>E</original>
    <variation>D</variation>
    <location>
        <position position="106"/>
    </location>
</feature>
<feature type="strand" evidence="6">
    <location>
        <begin position="5"/>
        <end position="14"/>
    </location>
</feature>
<feature type="helix" evidence="6">
    <location>
        <begin position="15"/>
        <end position="17"/>
    </location>
</feature>
<feature type="helix" evidence="6">
    <location>
        <begin position="18"/>
        <end position="27"/>
    </location>
</feature>
<feature type="strand" evidence="6">
    <location>
        <begin position="32"/>
        <end position="36"/>
    </location>
</feature>
<feature type="turn" evidence="6">
    <location>
        <begin position="38"/>
        <end position="40"/>
    </location>
</feature>
<feature type="helix" evidence="6">
    <location>
        <begin position="41"/>
        <end position="44"/>
    </location>
</feature>
<feature type="helix" evidence="6">
    <location>
        <begin position="45"/>
        <end position="47"/>
    </location>
</feature>
<feature type="strand" evidence="6">
    <location>
        <begin position="55"/>
        <end position="59"/>
    </location>
</feature>
<feature type="strand" evidence="6">
    <location>
        <begin position="61"/>
        <end position="63"/>
    </location>
</feature>
<feature type="strand" evidence="6">
    <location>
        <begin position="65"/>
        <end position="69"/>
    </location>
</feature>
<feature type="helix" evidence="6">
    <location>
        <begin position="71"/>
        <end position="81"/>
    </location>
</feature>
<feature type="helix" evidence="6">
    <location>
        <begin position="89"/>
        <end position="110"/>
    </location>
</feature>
<feature type="turn" evidence="6">
    <location>
        <begin position="111"/>
        <end position="114"/>
    </location>
</feature>
<feature type="helix" evidence="6">
    <location>
        <begin position="119"/>
        <end position="129"/>
    </location>
</feature>
<feature type="helix" evidence="6">
    <location>
        <begin position="131"/>
        <end position="144"/>
    </location>
</feature>
<feature type="strand" evidence="6">
    <location>
        <begin position="147"/>
        <end position="152"/>
    </location>
</feature>
<feature type="helix" evidence="6">
    <location>
        <begin position="158"/>
        <end position="173"/>
    </location>
</feature>
<feature type="turn" evidence="6">
    <location>
        <begin position="175"/>
        <end position="180"/>
    </location>
</feature>
<feature type="helix" evidence="6">
    <location>
        <begin position="183"/>
        <end position="195"/>
    </location>
</feature>
<feature type="helix" evidence="6">
    <location>
        <begin position="197"/>
        <end position="205"/>
    </location>
</feature>
<comment type="function">
    <text>Conjugation of reduced glutathione to a wide number of exogenous and endogenous hydrophobic electrophiles.</text>
</comment>
<comment type="function">
    <text>GST isoenzymes appear to play a central role in the parasite detoxification system. Other functions are also suspected including a role in increasing the solubility of haematin in the parasite gut.</text>
</comment>
<comment type="catalytic activity">
    <reaction>
        <text>RX + glutathione = an S-substituted glutathione + a halide anion + H(+)</text>
        <dbReference type="Rhea" id="RHEA:16437"/>
        <dbReference type="ChEBI" id="CHEBI:15378"/>
        <dbReference type="ChEBI" id="CHEBI:16042"/>
        <dbReference type="ChEBI" id="CHEBI:17792"/>
        <dbReference type="ChEBI" id="CHEBI:57925"/>
        <dbReference type="ChEBI" id="CHEBI:90779"/>
        <dbReference type="EC" id="2.5.1.18"/>
    </reaction>
</comment>
<comment type="subunit">
    <text evidence="2 3">Homodimer.</text>
</comment>
<comment type="tissue specificity">
    <text evidence="3">In the adult, expressed in excretory epithelial cells but absent from the caecal epithelium and flame cells. Also expressed in the tegument and its extensions into the parenchyma. In the schistosomulum, expressed in the tegument and associated structures. Not expressed in digestive tract, reproductive organs or muscles (at protein level).</text>
</comment>
<comment type="miscellaneous">
    <text>There are at least three isoenzymes of GST in S.mansoni.</text>
</comment>
<comment type="similarity">
    <text evidence="5">Belongs to the GST superfamily. Mu family.</text>
</comment>
<keyword id="KW-0002">3D-structure</keyword>
<keyword id="KW-0007">Acetylation</keyword>
<keyword id="KW-0903">Direct protein sequencing</keyword>
<keyword id="KW-1185">Reference proteome</keyword>
<keyword id="KW-0808">Transferase</keyword>
<protein>
    <recommendedName>
        <fullName>Glutathione S-transferase class-mu 28 kDa isozyme</fullName>
        <shortName>GST 28</shortName>
        <ecNumber>2.5.1.18</ecNumber>
    </recommendedName>
    <alternativeName>
        <fullName>GSH transferase S.m. 1-1</fullName>
    </alternativeName>
    <alternativeName>
        <fullName>Protective 28 kDa antigen</fullName>
    </alternativeName>
    <alternativeName>
        <fullName>Sm28 antigen</fullName>
    </alternativeName>
    <alternativeName>
        <fullName>Sm28GST</fullName>
    </alternativeName>
    <alternativeName>
        <fullName>Smp28</fullName>
    </alternativeName>
</protein>
<accession>P09792</accession>
<accession>G4LZY1</accession>
<accession>Q7M446</accession>
<dbReference type="EC" id="2.5.1.18"/>
<dbReference type="EMBL" id="X05148">
    <property type="protein sequence ID" value="CAA28796.1"/>
    <property type="molecule type" value="mRNA"/>
</dbReference>
<dbReference type="EMBL" id="M98271">
    <property type="protein sequence ID" value="AAA29891.1"/>
    <property type="molecule type" value="Genomic_DNA"/>
</dbReference>
<dbReference type="EMBL" id="S71584">
    <property type="protein sequence ID" value="AAC60508.1"/>
    <property type="molecule type" value="mRNA"/>
</dbReference>
<dbReference type="EMBL" id="CABG01000068">
    <property type="protein sequence ID" value="CCD60449.1"/>
    <property type="molecule type" value="Genomic_DNA"/>
</dbReference>
<dbReference type="PIR" id="JU0137">
    <property type="entry name" value="JU0137"/>
</dbReference>
<dbReference type="PIR" id="S02458">
    <property type="entry name" value="S02458"/>
</dbReference>
<dbReference type="RefSeq" id="XP_018646799.1">
    <property type="nucleotide sequence ID" value="XM_018797487.1"/>
</dbReference>
<dbReference type="PDB" id="1U3I">
    <property type="method" value="X-ray"/>
    <property type="resolution" value="1.89 A"/>
    <property type="chains" value="A=1-211"/>
</dbReference>
<dbReference type="PDBsum" id="1U3I"/>
<dbReference type="SMR" id="P09792"/>
<dbReference type="FunCoup" id="P09792">
    <property type="interactions" value="279"/>
</dbReference>
<dbReference type="STRING" id="6183.P09792"/>
<dbReference type="iPTMnet" id="P09792"/>
<dbReference type="GeneID" id="8342765"/>
<dbReference type="KEGG" id="smm:Smp_054160"/>
<dbReference type="CTD" id="8342765"/>
<dbReference type="eggNOG" id="KOG1695">
    <property type="taxonomic scope" value="Eukaryota"/>
</dbReference>
<dbReference type="HOGENOM" id="CLU_039475_1_0_1"/>
<dbReference type="InParanoid" id="P09792"/>
<dbReference type="OMA" id="DVEHEYH"/>
<dbReference type="OrthoDB" id="414243at2759"/>
<dbReference type="PhylomeDB" id="P09792"/>
<dbReference type="EvolutionaryTrace" id="P09792"/>
<dbReference type="Proteomes" id="UP000008854">
    <property type="component" value="Unassembled WGS sequence"/>
</dbReference>
<dbReference type="GO" id="GO:0004364">
    <property type="term" value="F:glutathione transferase activity"/>
    <property type="evidence" value="ECO:0007669"/>
    <property type="project" value="UniProtKB-EC"/>
</dbReference>
<dbReference type="GO" id="GO:0006749">
    <property type="term" value="P:glutathione metabolic process"/>
    <property type="evidence" value="ECO:0007669"/>
    <property type="project" value="TreeGrafter"/>
</dbReference>
<dbReference type="CDD" id="cd03192">
    <property type="entry name" value="GST_C_Sigma_like"/>
    <property type="match status" value="1"/>
</dbReference>
<dbReference type="CDD" id="cd03039">
    <property type="entry name" value="GST_N_Sigma_like"/>
    <property type="match status" value="1"/>
</dbReference>
<dbReference type="Gene3D" id="1.20.1050.10">
    <property type="match status" value="1"/>
</dbReference>
<dbReference type="Gene3D" id="3.40.30.10">
    <property type="entry name" value="Glutaredoxin"/>
    <property type="match status" value="1"/>
</dbReference>
<dbReference type="InterPro" id="IPR010987">
    <property type="entry name" value="Glutathione-S-Trfase_C-like"/>
</dbReference>
<dbReference type="InterPro" id="IPR036282">
    <property type="entry name" value="Glutathione-S-Trfase_C_sf"/>
</dbReference>
<dbReference type="InterPro" id="IPR004045">
    <property type="entry name" value="Glutathione_S-Trfase_N"/>
</dbReference>
<dbReference type="InterPro" id="IPR004046">
    <property type="entry name" value="GST_C"/>
</dbReference>
<dbReference type="InterPro" id="IPR050213">
    <property type="entry name" value="GST_superfamily"/>
</dbReference>
<dbReference type="InterPro" id="IPR036249">
    <property type="entry name" value="Thioredoxin-like_sf"/>
</dbReference>
<dbReference type="PANTHER" id="PTHR11571">
    <property type="entry name" value="GLUTATHIONE S-TRANSFERASE"/>
    <property type="match status" value="1"/>
</dbReference>
<dbReference type="PANTHER" id="PTHR11571:SF150">
    <property type="entry name" value="GLUTATHIONE S-TRANSFERASE"/>
    <property type="match status" value="1"/>
</dbReference>
<dbReference type="Pfam" id="PF00043">
    <property type="entry name" value="GST_C"/>
    <property type="match status" value="1"/>
</dbReference>
<dbReference type="Pfam" id="PF02798">
    <property type="entry name" value="GST_N"/>
    <property type="match status" value="1"/>
</dbReference>
<dbReference type="SFLD" id="SFLDG01205">
    <property type="entry name" value="AMPS.1"/>
    <property type="match status" value="1"/>
</dbReference>
<dbReference type="SFLD" id="SFLDG00363">
    <property type="entry name" value="AMPS_(cytGST):_Alpha-__Mu-__Pi"/>
    <property type="match status" value="1"/>
</dbReference>
<dbReference type="SUPFAM" id="SSF47616">
    <property type="entry name" value="GST C-terminal domain-like"/>
    <property type="match status" value="1"/>
</dbReference>
<dbReference type="SUPFAM" id="SSF52833">
    <property type="entry name" value="Thioredoxin-like"/>
    <property type="match status" value="1"/>
</dbReference>
<dbReference type="PROSITE" id="PS50405">
    <property type="entry name" value="GST_CTER"/>
    <property type="match status" value="1"/>
</dbReference>
<dbReference type="PROSITE" id="PS50404">
    <property type="entry name" value="GST_NTER"/>
    <property type="match status" value="1"/>
</dbReference>